<comment type="function">
    <text evidence="1 2">Hydrolyzes the phosphodiester bond of glycerophosphodiesters such as glycerophosphoinositol (GroPIns) and glycerophosphoethanolamine (GroPEth), to yield a glycerol phosphate and an alcohol (By similarity). Hydrolyzes glycerophospho-N-acylethanolamines to N-acylethanolamines in the brain and participates in bioactive N-acylethanolamine biosynthesis such as anandamide (an endocannabinoid), N-palmitoylethanolamine (an anti-inflammatory), and N-oleoylethanolamine (an anorexic). In addition, has a lysophospholipase D activity by hydrolyzing N-acyl-lysoplasmenylethanolamine (N-acyl-lysoPlsEt) to N-acylethanolamine. However lysophospholipase D activity is lower than glycerophosphodiester phosphodiesterase activity (By similarity). Has little or no activity towards glycerophosphocholine (By similarity).</text>
</comment>
<comment type="catalytic activity">
    <reaction evidence="1">
        <text>sn-glycero-3-phospho-1D-myo-inositol + H2O = myo-inositol + sn-glycerol 3-phosphate + H(+)</text>
        <dbReference type="Rhea" id="RHEA:16501"/>
        <dbReference type="ChEBI" id="CHEBI:15377"/>
        <dbReference type="ChEBI" id="CHEBI:15378"/>
        <dbReference type="ChEBI" id="CHEBI:17268"/>
        <dbReference type="ChEBI" id="CHEBI:57597"/>
        <dbReference type="ChEBI" id="CHEBI:58444"/>
        <dbReference type="EC" id="3.1.4.44"/>
    </reaction>
    <physiologicalReaction direction="left-to-right" evidence="1">
        <dbReference type="Rhea" id="RHEA:16502"/>
    </physiologicalReaction>
</comment>
<comment type="catalytic activity">
    <reaction evidence="2">
        <text>1-O-(1Z-octadecenyl)-sn-glycero-3-phospho-(N-5Z,8Z,11Z,14Z-eicosatetraenoyl)-ethanolamine + H2O = 1-O-(1Z-octadecenyl)-sn-glycero-3-phosphate + N-(5Z,8Z,11Z,14Z-eicosatetraenoyl)-ethanolamine + H(+)</text>
        <dbReference type="Rhea" id="RHEA:53192"/>
        <dbReference type="ChEBI" id="CHEBI:2700"/>
        <dbReference type="ChEBI" id="CHEBI:15377"/>
        <dbReference type="ChEBI" id="CHEBI:15378"/>
        <dbReference type="ChEBI" id="CHEBI:137016"/>
        <dbReference type="ChEBI" id="CHEBI:137017"/>
    </reaction>
    <physiologicalReaction direction="left-to-right" evidence="2">
        <dbReference type="Rhea" id="RHEA:53193"/>
    </physiologicalReaction>
</comment>
<comment type="catalytic activity">
    <reaction evidence="2">
        <text>1-O-(1Z-octadecenyl)-sn-glycero-3-phospho-(N-9Z-octadecenoyl)-ethanolamine + H2O = 1-O-(1Z-octadecenyl)-sn-glycero-3-phosphate + N-(9Z-octadecenoyl) ethanolamine + H(+)</text>
        <dbReference type="Rhea" id="RHEA:53188"/>
        <dbReference type="ChEBI" id="CHEBI:15377"/>
        <dbReference type="ChEBI" id="CHEBI:15378"/>
        <dbReference type="ChEBI" id="CHEBI:71466"/>
        <dbReference type="ChEBI" id="CHEBI:137010"/>
        <dbReference type="ChEBI" id="CHEBI:137017"/>
    </reaction>
    <physiologicalReaction direction="left-to-right" evidence="2">
        <dbReference type="Rhea" id="RHEA:53189"/>
    </physiologicalReaction>
</comment>
<comment type="catalytic activity">
    <reaction evidence="2">
        <text>1-O-(1Z-octadecenyl)-sn-glycero-3-phospho-N-hexadecanoyl-ethanolamine + H2O = 1-O-(1Z-octadecenyl)-sn-glycero-3-phosphate + N-hexadecanoylethanolamine + H(+)</text>
        <dbReference type="Rhea" id="RHEA:53184"/>
        <dbReference type="ChEBI" id="CHEBI:15377"/>
        <dbReference type="ChEBI" id="CHEBI:15378"/>
        <dbReference type="ChEBI" id="CHEBI:71464"/>
        <dbReference type="ChEBI" id="CHEBI:137009"/>
        <dbReference type="ChEBI" id="CHEBI:137017"/>
    </reaction>
    <physiologicalReaction direction="left-to-right" evidence="2">
        <dbReference type="Rhea" id="RHEA:53185"/>
    </physiologicalReaction>
</comment>
<comment type="catalytic activity">
    <reaction evidence="2">
        <text>N-(4Z,7Z,10Z,13Z,16Z,19Z)-docosahexaenoyl-sn-glycero-3-phosphoethanolamine + H2O = N-(4Z,7Z,10Z,13Z,16Z,19Z)-docosahexaenoyl ethanolamine + sn-glycerol 3-phosphate + H(+)</text>
        <dbReference type="Rhea" id="RHEA:45444"/>
        <dbReference type="ChEBI" id="CHEBI:15377"/>
        <dbReference type="ChEBI" id="CHEBI:15378"/>
        <dbReference type="ChEBI" id="CHEBI:57597"/>
        <dbReference type="ChEBI" id="CHEBI:85250"/>
        <dbReference type="ChEBI" id="CHEBI:85252"/>
    </reaction>
    <physiologicalReaction direction="left-to-right" evidence="2">
        <dbReference type="Rhea" id="RHEA:45445"/>
    </physiologicalReaction>
</comment>
<comment type="catalytic activity">
    <reaction evidence="2">
        <text>N-eicosanoyl-sn-glycero-3-phosphoethanolamine + H2O = N-eicosanoyl ethanolamine + sn-glycerol 3-phosphate + H(+)</text>
        <dbReference type="Rhea" id="RHEA:45440"/>
        <dbReference type="ChEBI" id="CHEBI:15377"/>
        <dbReference type="ChEBI" id="CHEBI:15378"/>
        <dbReference type="ChEBI" id="CHEBI:57597"/>
        <dbReference type="ChEBI" id="CHEBI:85228"/>
        <dbReference type="ChEBI" id="CHEBI:85253"/>
    </reaction>
    <physiologicalReaction direction="left-to-right" evidence="2">
        <dbReference type="Rhea" id="RHEA:45441"/>
    </physiologicalReaction>
</comment>
<comment type="catalytic activity">
    <reaction evidence="2">
        <text>N-hexadecanoyl-sn-glycero-3-phosphoethanolamine + H2O = N-hexadecanoylethanolamine + sn-glycerol 3-phosphate + H(+)</text>
        <dbReference type="Rhea" id="RHEA:45436"/>
        <dbReference type="ChEBI" id="CHEBI:15377"/>
        <dbReference type="ChEBI" id="CHEBI:15378"/>
        <dbReference type="ChEBI" id="CHEBI:57597"/>
        <dbReference type="ChEBI" id="CHEBI:71464"/>
        <dbReference type="ChEBI" id="CHEBI:85226"/>
    </reaction>
    <physiologicalReaction direction="left-to-right" evidence="2">
        <dbReference type="Rhea" id="RHEA:45437"/>
    </physiologicalReaction>
</comment>
<comment type="catalytic activity">
    <reaction evidence="2">
        <text>N-(9Z-octadecenoyl)-sn-glycero-3-phosphoethanolamine + H2O = N-(9Z-octadecenoyl) ethanolamine + sn-glycerol 3-phosphate + H(+)</text>
        <dbReference type="Rhea" id="RHEA:45432"/>
        <dbReference type="ChEBI" id="CHEBI:15377"/>
        <dbReference type="ChEBI" id="CHEBI:15378"/>
        <dbReference type="ChEBI" id="CHEBI:57597"/>
        <dbReference type="ChEBI" id="CHEBI:71466"/>
        <dbReference type="ChEBI" id="CHEBI:85229"/>
    </reaction>
    <physiologicalReaction direction="left-to-right" evidence="2">
        <dbReference type="Rhea" id="RHEA:45433"/>
    </physiologicalReaction>
</comment>
<comment type="catalytic activity">
    <reaction evidence="2">
        <text>N-(5Z,8Z,11Z,14Z-eicosatetraenoyl)-sn-glycero-3-phosphoethanolamine + H2O = N-(5Z,8Z,11Z,14Z-eicosatetraenoyl)-ethanolamine + sn-glycerol 3-phosphate + H(+)</text>
        <dbReference type="Rhea" id="RHEA:45428"/>
        <dbReference type="ChEBI" id="CHEBI:2700"/>
        <dbReference type="ChEBI" id="CHEBI:15377"/>
        <dbReference type="ChEBI" id="CHEBI:15378"/>
        <dbReference type="ChEBI" id="CHEBI:57597"/>
        <dbReference type="ChEBI" id="CHEBI:85230"/>
    </reaction>
    <physiologicalReaction direction="left-to-right" evidence="2">
        <dbReference type="Rhea" id="RHEA:45429"/>
    </physiologicalReaction>
</comment>
<comment type="cofactor">
    <cofactor evidence="1">
        <name>Mg(2+)</name>
        <dbReference type="ChEBI" id="CHEBI:18420"/>
    </cofactor>
</comment>
<comment type="activity regulation">
    <text evidence="1 2">Inhibited by EDTA, calcium chloride, and zinc chloride. Enhanced by magnesium chloride (By similarity). Glycerophosphodiester phosphodiesterase activity can be modulated by G-protein signaling pathways (By similarity).</text>
</comment>
<comment type="subunit">
    <text evidence="1 5">Interacts with PRAF2 (PubMed:16472945). Interacts with RGS16 (By similarity).</text>
</comment>
<comment type="interaction">
    <interactant intactId="EBI-2833330">
        <id>Q9NZC3</id>
    </interactant>
    <interactant intactId="EBI-20870433">
        <id>Q96LI9</id>
        <label>CXorf58</label>
    </interactant>
    <organismsDiffer>false</organismsDiffer>
    <experiments>2</experiments>
</comment>
<comment type="interaction">
    <interactant intactId="EBI-2833330">
        <id>Q9NZC3</id>
    </interactant>
    <interactant intactId="EBI-3923031">
        <id>Q14973</id>
        <label>SLC10A1</label>
    </interactant>
    <organismsDiffer>false</organismsDiffer>
    <experiments>3</experiments>
</comment>
<comment type="subcellular location">
    <subcellularLocation>
        <location evidence="1">Cell membrane</location>
        <topology evidence="3">Multi-pass membrane protein</topology>
    </subcellularLocation>
    <subcellularLocation>
        <location evidence="1">Cytoplasmic vesicle membrane</location>
        <topology evidence="3">Multi-pass membrane protein</topology>
    </subcellularLocation>
    <text evidence="1">Perinuclear vesicles and cell membrane.</text>
</comment>
<comment type="tissue specificity">
    <text evidence="4">Widely expressed.</text>
</comment>
<comment type="PTM">
    <text evidence="1">N-glycosylated.</text>
</comment>
<comment type="similarity">
    <text evidence="7">Belongs to the glycerophosphoryl diester phosphodiesterase family.</text>
</comment>
<comment type="sequence caution" evidence="7">
    <conflict type="erroneous gene model prediction">
        <sequence resource="EMBL-CDS" id="AAC05440"/>
    </conflict>
</comment>
<comment type="sequence caution" evidence="7">
    <conflict type="erroneous gene model prediction">
        <sequence resource="EMBL-CDS" id="AAC05803"/>
    </conflict>
</comment>
<accession>Q9NZC3</accession>
<accession>O43334</accession>
<accession>Q6PKF7</accession>
<accession>Q7KYR4</accession>
<keyword id="KW-1003">Cell membrane</keyword>
<keyword id="KW-0968">Cytoplasmic vesicle</keyword>
<keyword id="KW-0325">Glycoprotein</keyword>
<keyword id="KW-0378">Hydrolase</keyword>
<keyword id="KW-0443">Lipid metabolism</keyword>
<keyword id="KW-0460">Magnesium</keyword>
<keyword id="KW-0472">Membrane</keyword>
<keyword id="KW-0479">Metal-binding</keyword>
<keyword id="KW-1267">Proteomics identification</keyword>
<keyword id="KW-1185">Reference proteome</keyword>
<keyword id="KW-0812">Transmembrane</keyword>
<keyword id="KW-1133">Transmembrane helix</keyword>
<sequence length="331" mass="37718">MWLWEDQGGLLGPFSFLLLVLLLVTRSPVNACLLTGSLFVLLRVFSFEPVPSCRALQVLKPRDRISAIAHRGGSHDAPENTLAAIRQAAKNGATGVELDIEFTSDGIPVLMHDNTVDRTTDGTGRLCDLTFEQIRKLNPAANHRLRNDFPDEKIPTLREAVAECLNHNLTIFFDVKGHAHKATEALKKMYMEFPQLYNNSVVCSFLPEVIYKMRQTDRDVITALTHRPWSLSHTGDGKPRYDTFWKHFIFVMMDILLDWSMHNILWYLCGISAFLMQKDFVSPAYLKKWSAKGIQVVGWTVNTFDEKSYYESHLGSSYITDSMVEDCEPHF</sequence>
<feature type="chain" id="PRO_0000251944" description="Glycerophosphodiester phosphodiesterase 1">
    <location>
        <begin position="1"/>
        <end position="331"/>
    </location>
</feature>
<feature type="topological domain" description="Cytoplasmic" evidence="3">
    <location>
        <begin position="1"/>
        <end position="3"/>
    </location>
</feature>
<feature type="transmembrane region" description="Helical" evidence="3">
    <location>
        <begin position="4"/>
        <end position="24"/>
    </location>
</feature>
<feature type="topological domain" description="Lumenal" evidence="3">
    <location>
        <begin position="25"/>
        <end position="247"/>
    </location>
</feature>
<feature type="transmembrane region" description="Helical" evidence="3">
    <location>
        <begin position="248"/>
        <end position="268"/>
    </location>
</feature>
<feature type="topological domain" description="Cytoplasmic" evidence="3">
    <location>
        <begin position="269"/>
        <end position="331"/>
    </location>
</feature>
<feature type="domain" description="GP-PDE">
    <location>
        <begin position="65"/>
        <end position="331"/>
    </location>
</feature>
<feature type="binding site" evidence="3">
    <location>
        <position position="97"/>
    </location>
    <ligand>
        <name>Mg(2+)</name>
        <dbReference type="ChEBI" id="CHEBI:18420"/>
    </ligand>
</feature>
<feature type="binding site" evidence="3">
    <location>
        <position position="99"/>
    </location>
    <ligand>
        <name>Mg(2+)</name>
        <dbReference type="ChEBI" id="CHEBI:18420"/>
    </ligand>
</feature>
<feature type="binding site" evidence="3">
    <location>
        <position position="174"/>
    </location>
    <ligand>
        <name>Mg(2+)</name>
        <dbReference type="ChEBI" id="CHEBI:18420"/>
    </ligand>
</feature>
<feature type="glycosylation site" description="N-linked (GlcNAc...) asparagine" evidence="3">
    <location>
        <position position="168"/>
    </location>
</feature>
<feature type="glycosylation site" description="N-linked (GlcNAc...) asparagine" evidence="3">
    <location>
        <position position="198"/>
    </location>
</feature>
<feature type="sequence variant" id="VAR_044018" description="In dbSNP:rs2072086.">
    <original>R</original>
    <variation>Q</variation>
    <location>
        <position position="218"/>
    </location>
</feature>
<feature type="sequence variant" id="VAR_044019" description="In dbSNP:rs34137361.">
    <original>E</original>
    <variation>K</variation>
    <location>
        <position position="328"/>
    </location>
</feature>
<evidence type="ECO:0000250" key="1">
    <source>
        <dbReference type="UniProtKB" id="Q9JL55"/>
    </source>
</evidence>
<evidence type="ECO:0000250" key="2">
    <source>
        <dbReference type="UniProtKB" id="Q9JL56"/>
    </source>
</evidence>
<evidence type="ECO:0000255" key="3"/>
<evidence type="ECO:0000269" key="4">
    <source>
    </source>
</evidence>
<evidence type="ECO:0000269" key="5">
    <source>
    </source>
</evidence>
<evidence type="ECO:0000303" key="6">
    <source>
    </source>
</evidence>
<evidence type="ECO:0000305" key="7"/>
<evidence type="ECO:0000312" key="8">
    <source>
        <dbReference type="HGNC" id="HGNC:29644"/>
    </source>
</evidence>
<gene>
    <name evidence="8" type="primary">GDE1</name>
    <name evidence="6" type="synonym">MIR16</name>
</gene>
<organism>
    <name type="scientific">Homo sapiens</name>
    <name type="common">Human</name>
    <dbReference type="NCBI Taxonomy" id="9606"/>
    <lineage>
        <taxon>Eukaryota</taxon>
        <taxon>Metazoa</taxon>
        <taxon>Chordata</taxon>
        <taxon>Craniata</taxon>
        <taxon>Vertebrata</taxon>
        <taxon>Euteleostomi</taxon>
        <taxon>Mammalia</taxon>
        <taxon>Eutheria</taxon>
        <taxon>Euarchontoglires</taxon>
        <taxon>Primates</taxon>
        <taxon>Haplorrhini</taxon>
        <taxon>Catarrhini</taxon>
        <taxon>Hominidae</taxon>
        <taxon>Homo</taxon>
    </lineage>
</organism>
<proteinExistence type="evidence at protein level"/>
<name>GDE1_HUMAN</name>
<dbReference type="EC" id="3.1.4.44" evidence="1"/>
<dbReference type="EC" id="3.1.4.-" evidence="2"/>
<dbReference type="EMBL" id="AF212862">
    <property type="protein sequence ID" value="AAF65234.1"/>
    <property type="molecule type" value="mRNA"/>
</dbReference>
<dbReference type="EMBL" id="AY463154">
    <property type="protein sequence ID" value="AAR25624.1"/>
    <property type="molecule type" value="mRNA"/>
</dbReference>
<dbReference type="EMBL" id="U91321">
    <property type="protein sequence ID" value="AAC05440.1"/>
    <property type="status" value="ALT_SEQ"/>
    <property type="molecule type" value="Genomic_DNA"/>
</dbReference>
<dbReference type="EMBL" id="AC003108">
    <property type="protein sequence ID" value="AAC05803.1"/>
    <property type="status" value="ALT_SEQ"/>
    <property type="molecule type" value="Genomic_DNA"/>
</dbReference>
<dbReference type="EMBL" id="BC014981">
    <property type="protein sequence ID" value="AAH14981.1"/>
    <property type="molecule type" value="mRNA"/>
</dbReference>
<dbReference type="EMBL" id="BC025273">
    <property type="protein sequence ID" value="AAH25273.1"/>
    <property type="molecule type" value="mRNA"/>
</dbReference>
<dbReference type="CCDS" id="CCDS10578.1"/>
<dbReference type="PIR" id="T01371">
    <property type="entry name" value="T01371"/>
</dbReference>
<dbReference type="RefSeq" id="NP_057725.1">
    <property type="nucleotide sequence ID" value="NM_016641.4"/>
</dbReference>
<dbReference type="SMR" id="Q9NZC3"/>
<dbReference type="BioGRID" id="119618">
    <property type="interactions" value="37"/>
</dbReference>
<dbReference type="FunCoup" id="Q9NZC3">
    <property type="interactions" value="599"/>
</dbReference>
<dbReference type="IntAct" id="Q9NZC3">
    <property type="interactions" value="25"/>
</dbReference>
<dbReference type="MINT" id="Q9NZC3"/>
<dbReference type="STRING" id="9606.ENSP00000261386"/>
<dbReference type="GlyCosmos" id="Q9NZC3">
    <property type="glycosylation" value="2 sites, No reported glycans"/>
</dbReference>
<dbReference type="GlyGen" id="Q9NZC3">
    <property type="glycosylation" value="4 sites, 6 N-linked glycans (2 sites), 1 O-linked glycan (1 site)"/>
</dbReference>
<dbReference type="iPTMnet" id="Q9NZC3"/>
<dbReference type="PhosphoSitePlus" id="Q9NZC3"/>
<dbReference type="SwissPalm" id="Q9NZC3"/>
<dbReference type="BioMuta" id="GDE1"/>
<dbReference type="DMDM" id="74734724"/>
<dbReference type="jPOST" id="Q9NZC3"/>
<dbReference type="MassIVE" id="Q9NZC3"/>
<dbReference type="PaxDb" id="9606-ENSP00000261386"/>
<dbReference type="PeptideAtlas" id="Q9NZC3"/>
<dbReference type="ProteomicsDB" id="83361"/>
<dbReference type="Pumba" id="Q9NZC3"/>
<dbReference type="Antibodypedia" id="25375">
    <property type="antibodies" value="167 antibodies from 25 providers"/>
</dbReference>
<dbReference type="DNASU" id="51573"/>
<dbReference type="Ensembl" id="ENST00000353258.8">
    <property type="protein sequence ID" value="ENSP00000261386.3"/>
    <property type="gene ID" value="ENSG00000006007.12"/>
</dbReference>
<dbReference type="GeneID" id="51573"/>
<dbReference type="KEGG" id="hsa:51573"/>
<dbReference type="MANE-Select" id="ENST00000353258.8">
    <property type="protein sequence ID" value="ENSP00000261386.3"/>
    <property type="RefSeq nucleotide sequence ID" value="NM_016641.4"/>
    <property type="RefSeq protein sequence ID" value="NP_057725.1"/>
</dbReference>
<dbReference type="UCSC" id="uc002dgh.4">
    <property type="organism name" value="human"/>
</dbReference>
<dbReference type="AGR" id="HGNC:29644"/>
<dbReference type="CTD" id="51573"/>
<dbReference type="DisGeNET" id="51573"/>
<dbReference type="GeneCards" id="GDE1"/>
<dbReference type="HGNC" id="HGNC:29644">
    <property type="gene designation" value="GDE1"/>
</dbReference>
<dbReference type="HPA" id="ENSG00000006007">
    <property type="expression patterns" value="Low tissue specificity"/>
</dbReference>
<dbReference type="MIM" id="605943">
    <property type="type" value="gene"/>
</dbReference>
<dbReference type="neXtProt" id="NX_Q9NZC3"/>
<dbReference type="OpenTargets" id="ENSG00000006007"/>
<dbReference type="PharmGKB" id="PA162389327"/>
<dbReference type="VEuPathDB" id="HostDB:ENSG00000006007"/>
<dbReference type="eggNOG" id="KOG2258">
    <property type="taxonomic scope" value="Eukaryota"/>
</dbReference>
<dbReference type="GeneTree" id="ENSGT00510000047820"/>
<dbReference type="HOGENOM" id="CLU_030006_2_1_1"/>
<dbReference type="InParanoid" id="Q9NZC3"/>
<dbReference type="OMA" id="KHHWMTL"/>
<dbReference type="OrthoDB" id="197419at2759"/>
<dbReference type="PAN-GO" id="Q9NZC3">
    <property type="GO annotations" value="5 GO annotations based on evolutionary models"/>
</dbReference>
<dbReference type="PhylomeDB" id="Q9NZC3"/>
<dbReference type="TreeFam" id="TF313692"/>
<dbReference type="BioCyc" id="MetaCyc:HS00157-MONOMER"/>
<dbReference type="BRENDA" id="3.1.4.44">
    <property type="organism ID" value="2681"/>
</dbReference>
<dbReference type="PathwayCommons" id="Q9NZC3"/>
<dbReference type="Reactome" id="R-HSA-6814848">
    <property type="pathway name" value="Glycerophospholipid catabolism"/>
</dbReference>
<dbReference type="SignaLink" id="Q9NZC3"/>
<dbReference type="BioGRID-ORCS" id="51573">
    <property type="hits" value="21 hits in 1167 CRISPR screens"/>
</dbReference>
<dbReference type="ChiTaRS" id="GDE1">
    <property type="organism name" value="human"/>
</dbReference>
<dbReference type="GenomeRNAi" id="51573"/>
<dbReference type="Pharos" id="Q9NZC3">
    <property type="development level" value="Tbio"/>
</dbReference>
<dbReference type="PRO" id="PR:Q9NZC3"/>
<dbReference type="Proteomes" id="UP000005640">
    <property type="component" value="Chromosome 16"/>
</dbReference>
<dbReference type="RNAct" id="Q9NZC3">
    <property type="molecule type" value="protein"/>
</dbReference>
<dbReference type="Bgee" id="ENSG00000006007">
    <property type="expression patterns" value="Expressed in left ventricle myocardium and 204 other cell types or tissues"/>
</dbReference>
<dbReference type="ExpressionAtlas" id="Q9NZC3">
    <property type="expression patterns" value="baseline and differential"/>
</dbReference>
<dbReference type="GO" id="GO:0030659">
    <property type="term" value="C:cytoplasmic vesicle membrane"/>
    <property type="evidence" value="ECO:0007669"/>
    <property type="project" value="UniProtKB-SubCell"/>
</dbReference>
<dbReference type="GO" id="GO:0016020">
    <property type="term" value="C:membrane"/>
    <property type="evidence" value="ECO:0000304"/>
    <property type="project" value="UniProtKB"/>
</dbReference>
<dbReference type="GO" id="GO:0005886">
    <property type="term" value="C:plasma membrane"/>
    <property type="evidence" value="ECO:0000250"/>
    <property type="project" value="UniProtKB"/>
</dbReference>
<dbReference type="GO" id="GO:0008889">
    <property type="term" value="F:glycerophosphodiester phosphodiesterase activity"/>
    <property type="evidence" value="ECO:0000250"/>
    <property type="project" value="UniProtKB"/>
</dbReference>
<dbReference type="GO" id="GO:0047395">
    <property type="term" value="F:glycerophosphoinositol glycerophosphodiesterase activity"/>
    <property type="evidence" value="ECO:0000250"/>
    <property type="project" value="UniProtKB"/>
</dbReference>
<dbReference type="GO" id="GO:0004622">
    <property type="term" value="F:lysophospholipase activity"/>
    <property type="evidence" value="ECO:0000250"/>
    <property type="project" value="UniProtKB"/>
</dbReference>
<dbReference type="GO" id="GO:0046872">
    <property type="term" value="F:metal ion binding"/>
    <property type="evidence" value="ECO:0007669"/>
    <property type="project" value="UniProtKB-KW"/>
</dbReference>
<dbReference type="GO" id="GO:0006580">
    <property type="term" value="P:ethanolamine metabolic process"/>
    <property type="evidence" value="ECO:0000250"/>
    <property type="project" value="UniProtKB"/>
</dbReference>
<dbReference type="GO" id="GO:0046475">
    <property type="term" value="P:glycerophospholipid catabolic process"/>
    <property type="evidence" value="ECO:0000304"/>
    <property type="project" value="Reactome"/>
</dbReference>
<dbReference type="GO" id="GO:0006629">
    <property type="term" value="P:lipid metabolic process"/>
    <property type="evidence" value="ECO:0000304"/>
    <property type="project" value="UniProtKB"/>
</dbReference>
<dbReference type="GO" id="GO:0070291">
    <property type="term" value="P:N-acylethanolamine metabolic process"/>
    <property type="evidence" value="ECO:0000250"/>
    <property type="project" value="UniProtKB"/>
</dbReference>
<dbReference type="GO" id="GO:0006644">
    <property type="term" value="P:phospholipid metabolic process"/>
    <property type="evidence" value="ECO:0000250"/>
    <property type="project" value="UniProtKB"/>
</dbReference>
<dbReference type="CDD" id="cd08573">
    <property type="entry name" value="GDPD_GDE1"/>
    <property type="match status" value="1"/>
</dbReference>
<dbReference type="FunFam" id="3.20.20.190:FF:000029">
    <property type="entry name" value="Glycerophosphodiester phosphodiesterase 1 isoform X1"/>
    <property type="match status" value="1"/>
</dbReference>
<dbReference type="Gene3D" id="3.20.20.190">
    <property type="entry name" value="Phosphatidylinositol (PI) phosphodiesterase"/>
    <property type="match status" value="1"/>
</dbReference>
<dbReference type="InterPro" id="IPR030395">
    <property type="entry name" value="GP_PDE_dom"/>
</dbReference>
<dbReference type="InterPro" id="IPR017946">
    <property type="entry name" value="PLC-like_Pdiesterase_TIM-brl"/>
</dbReference>
<dbReference type="PANTHER" id="PTHR46320">
    <property type="entry name" value="GLYCEROPHOSPHODIESTER PHOSPHODIESTERASE 1"/>
    <property type="match status" value="1"/>
</dbReference>
<dbReference type="PANTHER" id="PTHR46320:SF1">
    <property type="entry name" value="GLYCEROPHOSPHODIESTER PHOSPHODIESTERASE 1"/>
    <property type="match status" value="1"/>
</dbReference>
<dbReference type="Pfam" id="PF03009">
    <property type="entry name" value="GDPD"/>
    <property type="match status" value="1"/>
</dbReference>
<dbReference type="SUPFAM" id="SSF51695">
    <property type="entry name" value="PLC-like phosphodiesterases"/>
    <property type="match status" value="1"/>
</dbReference>
<dbReference type="PROSITE" id="PS51704">
    <property type="entry name" value="GP_PDE"/>
    <property type="match status" value="1"/>
</dbReference>
<protein>
    <recommendedName>
        <fullName evidence="7">Glycerophosphodiester phosphodiesterase 1</fullName>
    </recommendedName>
    <alternativeName>
        <fullName evidence="7">Glycerophosphoinositol glycerophosphodiesterase GDE1</fullName>
        <ecNumber evidence="1">3.1.4.44</ecNumber>
    </alternativeName>
    <alternativeName>
        <fullName evidence="7">Lysophospholipase D GDE1</fullName>
        <ecNumber evidence="2">3.1.4.-</ecNumber>
    </alternativeName>
    <alternativeName>
        <fullName evidence="6">Membrane-interacting protein of RGS16</fullName>
    </alternativeName>
    <alternativeName>
        <fullName>RGS16-interacting membrane protein</fullName>
    </alternativeName>
</protein>
<reference key="1">
    <citation type="journal article" date="2000" name="Proc. Natl. Acad. Sci. U.S.A.">
        <title>MIR16, a putative membrane glycerophosphodiester phosphodiesterase, interacts with RGS16.</title>
        <authorList>
            <person name="Zheng B."/>
            <person name="Chen D."/>
            <person name="Farquhar M.G."/>
        </authorList>
    </citation>
    <scope>NUCLEOTIDE SEQUENCE [MRNA]</scope>
    <scope>TISSUE SPECIFICITY</scope>
</reference>
<reference key="2">
    <citation type="submission" date="2003-11" db="EMBL/GenBank/DDBJ databases">
        <title>The role of GDE1/MIR16 in G protein-coupled receptor signaling.</title>
        <authorList>
            <person name="Duennebier F.F."/>
            <person name="Bachmann A.S."/>
        </authorList>
    </citation>
    <scope>NUCLEOTIDE SEQUENCE [MRNA]</scope>
    <source>
        <tissue>Brain</tissue>
    </source>
</reference>
<reference key="3">
    <citation type="journal article" date="1999" name="Genomics">
        <title>Genome duplications and other features in 12 Mb of DNA sequence from human chromosome 16p and 16q.</title>
        <authorList>
            <person name="Loftus B.J."/>
            <person name="Kim U.-J."/>
            <person name="Sneddon V.P."/>
            <person name="Kalush F."/>
            <person name="Brandon R."/>
            <person name="Fuhrmann J."/>
            <person name="Mason T."/>
            <person name="Crosby M.L."/>
            <person name="Barnstead M."/>
            <person name="Cronin L."/>
            <person name="Mays A.D."/>
            <person name="Cao Y."/>
            <person name="Xu R.X."/>
            <person name="Kang H.-L."/>
            <person name="Mitchell S."/>
            <person name="Eichler E.E."/>
            <person name="Harris P.C."/>
            <person name="Venter J.C."/>
            <person name="Adams M.D."/>
        </authorList>
    </citation>
    <scope>NUCLEOTIDE SEQUENCE [LARGE SCALE GENOMIC DNA]</scope>
</reference>
<reference key="4">
    <citation type="journal article" date="2004" name="Genome Res.">
        <title>The status, quality, and expansion of the NIH full-length cDNA project: the Mammalian Gene Collection (MGC).</title>
        <authorList>
            <consortium name="The MGC Project Team"/>
        </authorList>
    </citation>
    <scope>NUCLEOTIDE SEQUENCE [LARGE SCALE MRNA]</scope>
    <source>
        <tissue>B-cell</tissue>
        <tissue>Brain</tissue>
        <tissue>Colon</tissue>
        <tissue>Kidney</tissue>
    </source>
</reference>
<reference key="5">
    <citation type="journal article" date="2006" name="Gene">
        <title>Genomic organization, characterization, and molecular 3D model of GDE1, a novel mammalian glycerophosphoinositol phosphodiesterase.</title>
        <authorList>
            <person name="Bachmann A.S."/>
            <person name="Duennebier F.F."/>
            <person name="Mocz G."/>
        </authorList>
    </citation>
    <scope>3D-STRUCTURE MODELING</scope>
    <scope>INTERACTION WITH PRAF2</scope>
</reference>